<protein>
    <recommendedName>
        <fullName>Clavaminate synthase-like protein At3g21360</fullName>
        <ecNumber>1.-.-.-</ecNumber>
    </recommendedName>
</protein>
<organism>
    <name type="scientific">Arabidopsis thaliana</name>
    <name type="common">Mouse-ear cress</name>
    <dbReference type="NCBI Taxonomy" id="3702"/>
    <lineage>
        <taxon>Eukaryota</taxon>
        <taxon>Viridiplantae</taxon>
        <taxon>Streptophyta</taxon>
        <taxon>Embryophyta</taxon>
        <taxon>Tracheophyta</taxon>
        <taxon>Spermatophyta</taxon>
        <taxon>Magnoliopsida</taxon>
        <taxon>eudicotyledons</taxon>
        <taxon>Gunneridae</taxon>
        <taxon>Pentapetalae</taxon>
        <taxon>rosids</taxon>
        <taxon>malvids</taxon>
        <taxon>Brassicales</taxon>
        <taxon>Brassicaceae</taxon>
        <taxon>Camelineae</taxon>
        <taxon>Arabidopsis</taxon>
    </lineage>
</organism>
<reference key="1">
    <citation type="journal article" date="2000" name="DNA Res.">
        <title>Structural analysis of Arabidopsis thaliana chromosome 3. II. Sequence features of the 4,251,695 bp regions covered by 90 P1, TAC and BAC clones.</title>
        <authorList>
            <person name="Kaneko T."/>
            <person name="Katoh T."/>
            <person name="Sato S."/>
            <person name="Nakamura Y."/>
            <person name="Asamizu E."/>
            <person name="Tabata S."/>
        </authorList>
    </citation>
    <scope>NUCLEOTIDE SEQUENCE [LARGE SCALE GENOMIC DNA]</scope>
    <source>
        <strain>cv. Columbia</strain>
    </source>
</reference>
<reference key="2">
    <citation type="journal article" date="2017" name="Plant J.">
        <title>Araport11: a complete reannotation of the Arabidopsis thaliana reference genome.</title>
        <authorList>
            <person name="Cheng C.Y."/>
            <person name="Krishnakumar V."/>
            <person name="Chan A.P."/>
            <person name="Thibaud-Nissen F."/>
            <person name="Schobel S."/>
            <person name="Town C.D."/>
        </authorList>
    </citation>
    <scope>GENOME REANNOTATION</scope>
    <source>
        <strain>cv. Columbia</strain>
    </source>
</reference>
<reference key="3">
    <citation type="journal article" date="2002" name="Science">
        <title>Functional annotation of a full-length Arabidopsis cDNA collection.</title>
        <authorList>
            <person name="Seki M."/>
            <person name="Narusaka M."/>
            <person name="Kamiya A."/>
            <person name="Ishida J."/>
            <person name="Satou M."/>
            <person name="Sakurai T."/>
            <person name="Nakajima M."/>
            <person name="Enju A."/>
            <person name="Akiyama K."/>
            <person name="Oono Y."/>
            <person name="Muramatsu M."/>
            <person name="Hayashizaki Y."/>
            <person name="Kawai J."/>
            <person name="Carninci P."/>
            <person name="Itoh M."/>
            <person name="Ishii Y."/>
            <person name="Arakawa T."/>
            <person name="Shibata K."/>
            <person name="Shinagawa A."/>
            <person name="Shinozaki K."/>
        </authorList>
    </citation>
    <scope>NUCLEOTIDE SEQUENCE [LARGE SCALE MRNA]</scope>
    <source>
        <strain>cv. Columbia</strain>
    </source>
</reference>
<reference key="4">
    <citation type="journal article" date="2009" name="Plant Physiol.">
        <title>Large-scale Arabidopsis phosphoproteome profiling reveals novel chloroplast kinase substrates and phosphorylation networks.</title>
        <authorList>
            <person name="Reiland S."/>
            <person name="Messerli G."/>
            <person name="Baerenfaller K."/>
            <person name="Gerrits B."/>
            <person name="Endler A."/>
            <person name="Grossmann J."/>
            <person name="Gruissem W."/>
            <person name="Baginsky S."/>
        </authorList>
    </citation>
    <scope>IDENTIFICATION BY MASS SPECTROMETRY [LARGE SCALE ANALYSIS]</scope>
</reference>
<reference key="5">
    <citation type="journal article" date="2012" name="Mol. Cell. Proteomics">
        <title>Comparative large-scale characterisation of plant vs. mammal proteins reveals similar and idiosyncratic N-alpha acetylation features.</title>
        <authorList>
            <person name="Bienvenut W.V."/>
            <person name="Sumpton D."/>
            <person name="Martinez A."/>
            <person name="Lilla S."/>
            <person name="Espagne C."/>
            <person name="Meinnel T."/>
            <person name="Giglione C."/>
        </authorList>
    </citation>
    <scope>ACETYLATION [LARGE SCALE ANALYSIS] AT ALA-2</scope>
    <scope>CLEAVAGE OF INITIATOR METHIONINE [LARGE SCALE ANALYSIS]</scope>
    <scope>IDENTIFICATION BY MASS SPECTROMETRY [LARGE SCALE ANALYSIS]</scope>
</reference>
<reference key="6">
    <citation type="journal article" date="2005" name="Acta Crystallogr. F">
        <title>The structure at 2.4 A resolution of the protein from gene locus At3g21360, a putative FeII/2-oxoglutarate-dependent enzyme from Arabidopsis thaliana.</title>
        <authorList>
            <person name="Bitto E."/>
            <person name="Bingman C.A."/>
            <person name="Allard S.T.M."/>
            <person name="Wesenberg G.E."/>
            <person name="Aceti D.J."/>
            <person name="Wrobel R.L."/>
            <person name="Frederick R.O."/>
            <person name="Sreenath H."/>
            <person name="Vojtik F.C."/>
            <person name="Jeon W.B."/>
            <person name="Newman C.S."/>
            <person name="Primm J."/>
            <person name="Sussman M.R."/>
            <person name="Fox B.G."/>
            <person name="Markley J.L."/>
            <person name="Phillips G.N. Jr."/>
        </authorList>
    </citation>
    <scope>X-RAY CRYSTALLOGRAPHY (2.4 ANGSTROMS) OF 1-330</scope>
    <scope>IRON-BINDING</scope>
</reference>
<accession>Q9LIG0</accession>
<gene>
    <name type="ordered locus">At3g21360</name>
    <name type="ORF">MHC9_4</name>
</gene>
<comment type="cofactor">
    <cofactor>
        <name>Fe cation</name>
        <dbReference type="ChEBI" id="CHEBI:24875"/>
    </cofactor>
    <text>Binds 1 Fe cation per subunit.</text>
</comment>
<comment type="miscellaneous">
    <text evidence="1">May use 2-oxoglutarate as a cosubstrate.</text>
</comment>
<feature type="initiator methionine" description="Removed" evidence="2">
    <location>
        <position position="1"/>
    </location>
</feature>
<feature type="chain" id="PRO_0000220604" description="Clavaminate synthase-like protein At3g21360">
    <location>
        <begin position="2"/>
        <end position="330"/>
    </location>
</feature>
<feature type="binding site">
    <location>
        <position position="120"/>
    </location>
    <ligand>
        <name>Fe cation</name>
        <dbReference type="ChEBI" id="CHEBI:24875"/>
    </ligand>
</feature>
<feature type="binding site">
    <location>
        <position position="122"/>
    </location>
    <ligand>
        <name>Fe cation</name>
        <dbReference type="ChEBI" id="CHEBI:24875"/>
    </ligand>
</feature>
<feature type="binding site">
    <location>
        <position position="313"/>
    </location>
    <ligand>
        <name>Fe cation</name>
        <dbReference type="ChEBI" id="CHEBI:24875"/>
    </ligand>
</feature>
<feature type="modified residue" description="N-acetylalanine" evidence="2">
    <location>
        <position position="2"/>
    </location>
</feature>
<feature type="strand" evidence="4">
    <location>
        <begin position="15"/>
        <end position="17"/>
    </location>
</feature>
<feature type="strand" evidence="4">
    <location>
        <begin position="20"/>
        <end position="27"/>
    </location>
</feature>
<feature type="helix" evidence="4">
    <location>
        <begin position="40"/>
        <end position="49"/>
    </location>
</feature>
<feature type="helix" evidence="4">
    <location>
        <begin position="51"/>
        <end position="61"/>
    </location>
</feature>
<feature type="strand" evidence="4">
    <location>
        <begin position="62"/>
        <end position="66"/>
    </location>
</feature>
<feature type="helix" evidence="4">
    <location>
        <begin position="74"/>
        <end position="83"/>
    </location>
</feature>
<feature type="strand" evidence="3">
    <location>
        <begin position="93"/>
        <end position="95"/>
    </location>
</feature>
<feature type="strand" evidence="4">
    <location>
        <begin position="99"/>
        <end position="102"/>
    </location>
</feature>
<feature type="strand" evidence="4">
    <location>
        <begin position="105"/>
        <end position="107"/>
    </location>
</feature>
<feature type="strand" evidence="4">
    <location>
        <begin position="117"/>
        <end position="120"/>
    </location>
</feature>
<feature type="turn" evidence="4">
    <location>
        <begin position="122"/>
        <end position="125"/>
    </location>
</feature>
<feature type="strand" evidence="3">
    <location>
        <begin position="126"/>
        <end position="128"/>
    </location>
</feature>
<feature type="strand" evidence="4">
    <location>
        <begin position="131"/>
        <end position="139"/>
    </location>
</feature>
<feature type="strand" evidence="4">
    <location>
        <begin position="142"/>
        <end position="144"/>
    </location>
</feature>
<feature type="strand" evidence="4">
    <location>
        <begin position="149"/>
        <end position="151"/>
    </location>
</feature>
<feature type="helix" evidence="4">
    <location>
        <begin position="152"/>
        <end position="162"/>
    </location>
</feature>
<feature type="helix" evidence="4">
    <location>
        <begin position="164"/>
        <end position="173"/>
    </location>
</feature>
<feature type="strand" evidence="4">
    <location>
        <begin position="175"/>
        <end position="181"/>
    </location>
</feature>
<feature type="strand" evidence="4">
    <location>
        <begin position="183"/>
        <end position="185"/>
    </location>
</feature>
<feature type="helix" evidence="4">
    <location>
        <begin position="195"/>
        <end position="198"/>
    </location>
</feature>
<feature type="helix" evidence="4">
    <location>
        <begin position="204"/>
        <end position="213"/>
    </location>
</feature>
<feature type="strand" evidence="3">
    <location>
        <begin position="217"/>
        <end position="220"/>
    </location>
</feature>
<feature type="strand" evidence="4">
    <location>
        <begin position="226"/>
        <end position="233"/>
    </location>
</feature>
<feature type="strand" evidence="4">
    <location>
        <begin position="235"/>
        <end position="239"/>
    </location>
</feature>
<feature type="turn" evidence="4">
    <location>
        <begin position="240"/>
        <end position="243"/>
    </location>
</feature>
<feature type="strand" evidence="4">
    <location>
        <begin position="244"/>
        <end position="246"/>
    </location>
</feature>
<feature type="helix" evidence="4">
    <location>
        <begin position="251"/>
        <end position="255"/>
    </location>
</feature>
<feature type="helix" evidence="4">
    <location>
        <begin position="265"/>
        <end position="268"/>
    </location>
</feature>
<feature type="strand" evidence="4">
    <location>
        <begin position="269"/>
        <end position="271"/>
    </location>
</feature>
<feature type="helix" evidence="4">
    <location>
        <begin position="279"/>
        <end position="292"/>
    </location>
</feature>
<feature type="strand" evidence="4">
    <location>
        <begin position="303"/>
        <end position="307"/>
    </location>
</feature>
<feature type="turn" evidence="4">
    <location>
        <begin position="308"/>
        <end position="310"/>
    </location>
</feature>
<feature type="strand" evidence="4">
    <location>
        <begin position="311"/>
        <end position="315"/>
    </location>
</feature>
<feature type="strand" evidence="4">
    <location>
        <begin position="318"/>
        <end position="320"/>
    </location>
</feature>
<feature type="strand" evidence="4">
    <location>
        <begin position="323"/>
        <end position="329"/>
    </location>
</feature>
<name>Y3136_ARATH</name>
<sequence>MAELLLVETPIPQQKHYESKPFPAVISPPSASIPIPALSLPLFTQTIKTQKHYLDSLLHESGAVLFRGFPVNSADDFNDVVEAFGFDELPYVGGAAPRTSVVGRVFTANESPPDQKIPFHHEMAQVREFPSKLFFYCEIEPKCGGETPIVLSHVVYERMKDKHPEFVQRLEEHGLLYVRVLGEDDDPSSPIGRGWKSTFLTHDKNLAEQRAVDLGMKLEWTEDGGAKTVMGPIPAIKYDESRNRKVWFNSMVAAYTGWEDKRNDPRKAVTFGDGKPLPADIVHDCLRILEEECVAVPWQRGDVLLIDNWAVLHSRRPFDPPRRVLASLCK</sequence>
<evidence type="ECO:0000250" key="1"/>
<evidence type="ECO:0007744" key="2">
    <source>
    </source>
</evidence>
<evidence type="ECO:0007829" key="3">
    <source>
        <dbReference type="PDB" id="1Y0Z"/>
    </source>
</evidence>
<evidence type="ECO:0007829" key="4">
    <source>
        <dbReference type="PDB" id="2Q4A"/>
    </source>
</evidence>
<dbReference type="EC" id="1.-.-.-"/>
<dbReference type="EMBL" id="AP001305">
    <property type="protein sequence ID" value="BAB03049.1"/>
    <property type="molecule type" value="Genomic_DNA"/>
</dbReference>
<dbReference type="EMBL" id="CP002686">
    <property type="protein sequence ID" value="AEE76500.1"/>
    <property type="molecule type" value="Genomic_DNA"/>
</dbReference>
<dbReference type="EMBL" id="AK117772">
    <property type="protein sequence ID" value="BAC42419.1"/>
    <property type="molecule type" value="mRNA"/>
</dbReference>
<dbReference type="RefSeq" id="NP_188773.1">
    <property type="nucleotide sequence ID" value="NM_113031.2"/>
</dbReference>
<dbReference type="PDB" id="1Y0Z">
    <property type="method" value="X-ray"/>
    <property type="resolution" value="2.40 A"/>
    <property type="chains" value="A/B=1-330"/>
</dbReference>
<dbReference type="PDB" id="2Q4A">
    <property type="method" value="X-ray"/>
    <property type="resolution" value="2.39 A"/>
    <property type="chains" value="A/B=1-330"/>
</dbReference>
<dbReference type="PDBsum" id="1Y0Z"/>
<dbReference type="PDBsum" id="2Q4A"/>
<dbReference type="SMR" id="Q9LIG0"/>
<dbReference type="FunCoup" id="Q9LIG0">
    <property type="interactions" value="7"/>
</dbReference>
<dbReference type="STRING" id="3702.Q9LIG0"/>
<dbReference type="iPTMnet" id="Q9LIG0"/>
<dbReference type="PaxDb" id="3702-AT3G21360.1"/>
<dbReference type="ProteomicsDB" id="242541"/>
<dbReference type="DNASU" id="821690"/>
<dbReference type="EnsemblPlants" id="AT3G21360.1">
    <property type="protein sequence ID" value="AT3G21360.1"/>
    <property type="gene ID" value="AT3G21360"/>
</dbReference>
<dbReference type="GeneID" id="821690"/>
<dbReference type="Gramene" id="AT3G21360.1">
    <property type="protein sequence ID" value="AT3G21360.1"/>
    <property type="gene ID" value="AT3G21360"/>
</dbReference>
<dbReference type="KEGG" id="ath:AT3G21360"/>
<dbReference type="Araport" id="AT3G21360"/>
<dbReference type="TAIR" id="AT3G21360"/>
<dbReference type="eggNOG" id="ENOG502QRUR">
    <property type="taxonomic scope" value="Eukaryota"/>
</dbReference>
<dbReference type="HOGENOM" id="CLU_044153_3_0_1"/>
<dbReference type="InParanoid" id="Q9LIG0"/>
<dbReference type="OMA" id="HNEQAYT"/>
<dbReference type="PhylomeDB" id="Q9LIG0"/>
<dbReference type="EvolutionaryTrace" id="Q9LIG0"/>
<dbReference type="PRO" id="PR:Q9LIG0"/>
<dbReference type="Proteomes" id="UP000006548">
    <property type="component" value="Chromosome 3"/>
</dbReference>
<dbReference type="ExpressionAtlas" id="Q9LIG0">
    <property type="expression patterns" value="baseline and differential"/>
</dbReference>
<dbReference type="GO" id="GO:0005829">
    <property type="term" value="C:cytosol"/>
    <property type="evidence" value="ECO:0007005"/>
    <property type="project" value="TAIR"/>
</dbReference>
<dbReference type="GO" id="GO:0005634">
    <property type="term" value="C:nucleus"/>
    <property type="evidence" value="ECO:0007005"/>
    <property type="project" value="TAIR"/>
</dbReference>
<dbReference type="GO" id="GO:0046872">
    <property type="term" value="F:metal ion binding"/>
    <property type="evidence" value="ECO:0007669"/>
    <property type="project" value="UniProtKB-KW"/>
</dbReference>
<dbReference type="GO" id="GO:0016491">
    <property type="term" value="F:oxidoreductase activity"/>
    <property type="evidence" value="ECO:0007669"/>
    <property type="project" value="UniProtKB-KW"/>
</dbReference>
<dbReference type="FunFam" id="3.60.130.10:FF:000006">
    <property type="entry name" value="Clavaminate synthase-like protein At3g21360"/>
    <property type="match status" value="1"/>
</dbReference>
<dbReference type="Gene3D" id="3.60.130.10">
    <property type="entry name" value="Clavaminate synthase-like"/>
    <property type="match status" value="1"/>
</dbReference>
<dbReference type="InterPro" id="IPR050411">
    <property type="entry name" value="AlphaKG_dependent_hydroxylases"/>
</dbReference>
<dbReference type="InterPro" id="IPR042098">
    <property type="entry name" value="TauD-like_sf"/>
</dbReference>
<dbReference type="InterPro" id="IPR003819">
    <property type="entry name" value="TauD/TfdA-like"/>
</dbReference>
<dbReference type="PANTHER" id="PTHR10696">
    <property type="entry name" value="GAMMA-BUTYROBETAINE HYDROXYLASE-RELATED"/>
    <property type="match status" value="1"/>
</dbReference>
<dbReference type="PANTHER" id="PTHR10696:SF21">
    <property type="entry name" value="TAUD_TFDA-LIKE DOMAIN-CONTAINING PROTEIN"/>
    <property type="match status" value="1"/>
</dbReference>
<dbReference type="Pfam" id="PF02668">
    <property type="entry name" value="TauD"/>
    <property type="match status" value="1"/>
</dbReference>
<dbReference type="SUPFAM" id="SSF51197">
    <property type="entry name" value="Clavaminate synthase-like"/>
    <property type="match status" value="1"/>
</dbReference>
<proteinExistence type="evidence at protein level"/>
<keyword id="KW-0002">3D-structure</keyword>
<keyword id="KW-0007">Acetylation</keyword>
<keyword id="KW-0408">Iron</keyword>
<keyword id="KW-0479">Metal-binding</keyword>
<keyword id="KW-0560">Oxidoreductase</keyword>
<keyword id="KW-1185">Reference proteome</keyword>